<comment type="function">
    <text evidence="1">Binds together with bS18 to 16S ribosomal RNA.</text>
</comment>
<comment type="similarity">
    <text evidence="1">Belongs to the bacterial ribosomal protein bS6 family.</text>
</comment>
<proteinExistence type="inferred from homology"/>
<organism>
    <name type="scientific">Geotalea daltonii (strain DSM 22248 / JCM 15807 / FRC-32)</name>
    <name type="common">Geobacter daltonii</name>
    <dbReference type="NCBI Taxonomy" id="316067"/>
    <lineage>
        <taxon>Bacteria</taxon>
        <taxon>Pseudomonadati</taxon>
        <taxon>Thermodesulfobacteriota</taxon>
        <taxon>Desulfuromonadia</taxon>
        <taxon>Geobacterales</taxon>
        <taxon>Geobacteraceae</taxon>
        <taxon>Geotalea</taxon>
    </lineage>
</organism>
<keyword id="KW-1185">Reference proteome</keyword>
<keyword id="KW-0687">Ribonucleoprotein</keyword>
<keyword id="KW-0689">Ribosomal protein</keyword>
<keyword id="KW-0694">RNA-binding</keyword>
<keyword id="KW-0699">rRNA-binding</keyword>
<dbReference type="EMBL" id="CP001390">
    <property type="protein sequence ID" value="ACM19929.1"/>
    <property type="molecule type" value="Genomic_DNA"/>
</dbReference>
<dbReference type="RefSeq" id="WP_012646658.1">
    <property type="nucleotide sequence ID" value="NC_011979.1"/>
</dbReference>
<dbReference type="SMR" id="B9M5U8"/>
<dbReference type="STRING" id="316067.Geob_1571"/>
<dbReference type="KEGG" id="geo:Geob_1571"/>
<dbReference type="eggNOG" id="COG0360">
    <property type="taxonomic scope" value="Bacteria"/>
</dbReference>
<dbReference type="HOGENOM" id="CLU_113441_2_0_7"/>
<dbReference type="OrthoDB" id="9812702at2"/>
<dbReference type="Proteomes" id="UP000007721">
    <property type="component" value="Chromosome"/>
</dbReference>
<dbReference type="GO" id="GO:0022627">
    <property type="term" value="C:cytosolic small ribosomal subunit"/>
    <property type="evidence" value="ECO:0007669"/>
    <property type="project" value="TreeGrafter"/>
</dbReference>
<dbReference type="GO" id="GO:0070181">
    <property type="term" value="F:small ribosomal subunit rRNA binding"/>
    <property type="evidence" value="ECO:0007669"/>
    <property type="project" value="TreeGrafter"/>
</dbReference>
<dbReference type="GO" id="GO:0003735">
    <property type="term" value="F:structural constituent of ribosome"/>
    <property type="evidence" value="ECO:0007669"/>
    <property type="project" value="InterPro"/>
</dbReference>
<dbReference type="GO" id="GO:0006412">
    <property type="term" value="P:translation"/>
    <property type="evidence" value="ECO:0007669"/>
    <property type="project" value="UniProtKB-UniRule"/>
</dbReference>
<dbReference type="CDD" id="cd00473">
    <property type="entry name" value="bS6"/>
    <property type="match status" value="1"/>
</dbReference>
<dbReference type="Gene3D" id="3.30.70.60">
    <property type="match status" value="1"/>
</dbReference>
<dbReference type="HAMAP" id="MF_00360">
    <property type="entry name" value="Ribosomal_bS6"/>
    <property type="match status" value="1"/>
</dbReference>
<dbReference type="InterPro" id="IPR000529">
    <property type="entry name" value="Ribosomal_bS6"/>
</dbReference>
<dbReference type="InterPro" id="IPR035980">
    <property type="entry name" value="Ribosomal_bS6_sf"/>
</dbReference>
<dbReference type="InterPro" id="IPR020814">
    <property type="entry name" value="Ribosomal_S6_plastid/chlpt"/>
</dbReference>
<dbReference type="InterPro" id="IPR014717">
    <property type="entry name" value="Transl_elong_EF1B/ribsomal_bS6"/>
</dbReference>
<dbReference type="NCBIfam" id="TIGR00166">
    <property type="entry name" value="S6"/>
    <property type="match status" value="1"/>
</dbReference>
<dbReference type="PANTHER" id="PTHR21011">
    <property type="entry name" value="MITOCHONDRIAL 28S RIBOSOMAL PROTEIN S6"/>
    <property type="match status" value="1"/>
</dbReference>
<dbReference type="PANTHER" id="PTHR21011:SF1">
    <property type="entry name" value="SMALL RIBOSOMAL SUBUNIT PROTEIN BS6M"/>
    <property type="match status" value="1"/>
</dbReference>
<dbReference type="Pfam" id="PF01250">
    <property type="entry name" value="Ribosomal_S6"/>
    <property type="match status" value="1"/>
</dbReference>
<dbReference type="SUPFAM" id="SSF54995">
    <property type="entry name" value="Ribosomal protein S6"/>
    <property type="match status" value="1"/>
</dbReference>
<accession>B9M5U8</accession>
<sequence>MRMYETIFIVQPDLGEEELKGISARVQEVIVSMKGELKRLEDWGARKLAYPIEKFNRGRYYYLRFDGDAALIAELERRLRLNDKIIRYQSVKLEKEAPAAAAIPAKVTEEEPVEAAPEAKVETTTEEE</sequence>
<protein>
    <recommendedName>
        <fullName evidence="1">Small ribosomal subunit protein bS6</fullName>
    </recommendedName>
    <alternativeName>
        <fullName evidence="3">30S ribosomal protein S6</fullName>
    </alternativeName>
</protein>
<gene>
    <name evidence="1" type="primary">rpsF</name>
    <name type="ordered locus">Geob_1571</name>
</gene>
<feature type="chain" id="PRO_1000133530" description="Small ribosomal subunit protein bS6">
    <location>
        <begin position="1"/>
        <end position="128"/>
    </location>
</feature>
<feature type="region of interest" description="Disordered" evidence="2">
    <location>
        <begin position="105"/>
        <end position="128"/>
    </location>
</feature>
<feature type="compositionally biased region" description="Basic and acidic residues" evidence="2">
    <location>
        <begin position="117"/>
        <end position="128"/>
    </location>
</feature>
<evidence type="ECO:0000255" key="1">
    <source>
        <dbReference type="HAMAP-Rule" id="MF_00360"/>
    </source>
</evidence>
<evidence type="ECO:0000256" key="2">
    <source>
        <dbReference type="SAM" id="MobiDB-lite"/>
    </source>
</evidence>
<evidence type="ECO:0000305" key="3"/>
<name>RS6_GEODF</name>
<reference key="1">
    <citation type="submission" date="2009-01" db="EMBL/GenBank/DDBJ databases">
        <title>Complete sequence of Geobacter sp. FRC-32.</title>
        <authorList>
            <consortium name="US DOE Joint Genome Institute"/>
            <person name="Lucas S."/>
            <person name="Copeland A."/>
            <person name="Lapidus A."/>
            <person name="Glavina del Rio T."/>
            <person name="Dalin E."/>
            <person name="Tice H."/>
            <person name="Bruce D."/>
            <person name="Goodwin L."/>
            <person name="Pitluck S."/>
            <person name="Saunders E."/>
            <person name="Brettin T."/>
            <person name="Detter J.C."/>
            <person name="Han C."/>
            <person name="Larimer F."/>
            <person name="Land M."/>
            <person name="Hauser L."/>
            <person name="Kyrpides N."/>
            <person name="Ovchinnikova G."/>
            <person name="Kostka J."/>
            <person name="Richardson P."/>
        </authorList>
    </citation>
    <scope>NUCLEOTIDE SEQUENCE [LARGE SCALE GENOMIC DNA]</scope>
    <source>
        <strain>DSM 22248 / JCM 15807 / FRC-32</strain>
    </source>
</reference>